<sequence length="127" mass="13177">MAEITKQDVIEYIEKMSVLELSELVKELEEKFGVSAAAPVAVAAAGPATADAAAAEEKTEFDVILKAAGANKINVIKVVRALTSLGLKEAKDLVDGAPGAVKTGVSKQEAEDAQKQLVEAGAEVEVK</sequence>
<reference key="1">
    <citation type="submission" date="2006-10" db="EMBL/GenBank/DDBJ databases">
        <title>Complete sequence of chromosome of Pelobacter propionicus DSM 2379.</title>
        <authorList>
            <consortium name="US DOE Joint Genome Institute"/>
            <person name="Copeland A."/>
            <person name="Lucas S."/>
            <person name="Lapidus A."/>
            <person name="Barry K."/>
            <person name="Detter J.C."/>
            <person name="Glavina del Rio T."/>
            <person name="Hammon N."/>
            <person name="Israni S."/>
            <person name="Dalin E."/>
            <person name="Tice H."/>
            <person name="Pitluck S."/>
            <person name="Saunders E."/>
            <person name="Brettin T."/>
            <person name="Bruce D."/>
            <person name="Han C."/>
            <person name="Tapia R."/>
            <person name="Schmutz J."/>
            <person name="Larimer F."/>
            <person name="Land M."/>
            <person name="Hauser L."/>
            <person name="Kyrpides N."/>
            <person name="Kim E."/>
            <person name="Lovley D."/>
            <person name="Richardson P."/>
        </authorList>
    </citation>
    <scope>NUCLEOTIDE SEQUENCE [LARGE SCALE GENOMIC DNA]</scope>
    <source>
        <strain>DSM 2379 / NBRC 103807 / OttBd1</strain>
    </source>
</reference>
<protein>
    <recommendedName>
        <fullName evidence="1">Large ribosomal subunit protein bL12</fullName>
    </recommendedName>
    <alternativeName>
        <fullName evidence="2">50S ribosomal protein L7/L12</fullName>
    </alternativeName>
</protein>
<name>RL7_PELPD</name>
<gene>
    <name evidence="1" type="primary">rplL</name>
    <name type="ordered locus">Ppro_0672</name>
</gene>
<feature type="chain" id="PRO_1000007053" description="Large ribosomal subunit protein bL12">
    <location>
        <begin position="1"/>
        <end position="127"/>
    </location>
</feature>
<accession>A1ALT3</accession>
<dbReference type="EMBL" id="CP000482">
    <property type="protein sequence ID" value="ABK98303.1"/>
    <property type="molecule type" value="Genomic_DNA"/>
</dbReference>
<dbReference type="RefSeq" id="WP_011734616.1">
    <property type="nucleotide sequence ID" value="NC_008609.1"/>
</dbReference>
<dbReference type="SMR" id="A1ALT3"/>
<dbReference type="STRING" id="338966.Ppro_0672"/>
<dbReference type="KEGG" id="ppd:Ppro_0672"/>
<dbReference type="eggNOG" id="COG0222">
    <property type="taxonomic scope" value="Bacteria"/>
</dbReference>
<dbReference type="HOGENOM" id="CLU_086499_3_0_7"/>
<dbReference type="OrthoDB" id="9811748at2"/>
<dbReference type="Proteomes" id="UP000006732">
    <property type="component" value="Chromosome"/>
</dbReference>
<dbReference type="GO" id="GO:0022625">
    <property type="term" value="C:cytosolic large ribosomal subunit"/>
    <property type="evidence" value="ECO:0007669"/>
    <property type="project" value="TreeGrafter"/>
</dbReference>
<dbReference type="GO" id="GO:0003729">
    <property type="term" value="F:mRNA binding"/>
    <property type="evidence" value="ECO:0007669"/>
    <property type="project" value="TreeGrafter"/>
</dbReference>
<dbReference type="GO" id="GO:0003735">
    <property type="term" value="F:structural constituent of ribosome"/>
    <property type="evidence" value="ECO:0007669"/>
    <property type="project" value="InterPro"/>
</dbReference>
<dbReference type="GO" id="GO:0006412">
    <property type="term" value="P:translation"/>
    <property type="evidence" value="ECO:0007669"/>
    <property type="project" value="UniProtKB-UniRule"/>
</dbReference>
<dbReference type="CDD" id="cd00387">
    <property type="entry name" value="Ribosomal_L7_L12"/>
    <property type="match status" value="1"/>
</dbReference>
<dbReference type="FunFam" id="3.30.1390.10:FF:000001">
    <property type="entry name" value="50S ribosomal protein L7/L12"/>
    <property type="match status" value="1"/>
</dbReference>
<dbReference type="Gene3D" id="3.30.1390.10">
    <property type="match status" value="1"/>
</dbReference>
<dbReference type="Gene3D" id="1.20.5.710">
    <property type="entry name" value="Single helix bin"/>
    <property type="match status" value="1"/>
</dbReference>
<dbReference type="HAMAP" id="MF_00368">
    <property type="entry name" value="Ribosomal_bL12"/>
    <property type="match status" value="1"/>
</dbReference>
<dbReference type="InterPro" id="IPR000206">
    <property type="entry name" value="Ribosomal_bL12"/>
</dbReference>
<dbReference type="InterPro" id="IPR013823">
    <property type="entry name" value="Ribosomal_bL12_C"/>
</dbReference>
<dbReference type="InterPro" id="IPR014719">
    <property type="entry name" value="Ribosomal_bL12_C/ClpS-like"/>
</dbReference>
<dbReference type="InterPro" id="IPR008932">
    <property type="entry name" value="Ribosomal_bL12_oligo"/>
</dbReference>
<dbReference type="InterPro" id="IPR036235">
    <property type="entry name" value="Ribosomal_bL12_oligo_N_sf"/>
</dbReference>
<dbReference type="NCBIfam" id="TIGR00855">
    <property type="entry name" value="L12"/>
    <property type="match status" value="1"/>
</dbReference>
<dbReference type="PANTHER" id="PTHR45987">
    <property type="entry name" value="39S RIBOSOMAL PROTEIN L12"/>
    <property type="match status" value="1"/>
</dbReference>
<dbReference type="PANTHER" id="PTHR45987:SF4">
    <property type="entry name" value="LARGE RIBOSOMAL SUBUNIT PROTEIN BL12M"/>
    <property type="match status" value="1"/>
</dbReference>
<dbReference type="Pfam" id="PF00542">
    <property type="entry name" value="Ribosomal_L12"/>
    <property type="match status" value="1"/>
</dbReference>
<dbReference type="Pfam" id="PF16320">
    <property type="entry name" value="Ribosomal_L12_N"/>
    <property type="match status" value="1"/>
</dbReference>
<dbReference type="SUPFAM" id="SSF54736">
    <property type="entry name" value="ClpS-like"/>
    <property type="match status" value="1"/>
</dbReference>
<dbReference type="SUPFAM" id="SSF48300">
    <property type="entry name" value="Ribosomal protein L7/12, oligomerisation (N-terminal) domain"/>
    <property type="match status" value="1"/>
</dbReference>
<keyword id="KW-1185">Reference proteome</keyword>
<keyword id="KW-0687">Ribonucleoprotein</keyword>
<keyword id="KW-0689">Ribosomal protein</keyword>
<proteinExistence type="inferred from homology"/>
<organism>
    <name type="scientific">Pelobacter propionicus (strain DSM 2379 / NBRC 103807 / OttBd1)</name>
    <dbReference type="NCBI Taxonomy" id="338966"/>
    <lineage>
        <taxon>Bacteria</taxon>
        <taxon>Pseudomonadati</taxon>
        <taxon>Thermodesulfobacteriota</taxon>
        <taxon>Desulfuromonadia</taxon>
        <taxon>Desulfuromonadales</taxon>
        <taxon>Desulfuromonadaceae</taxon>
        <taxon>Pelobacter</taxon>
    </lineage>
</organism>
<comment type="function">
    <text evidence="1">Forms part of the ribosomal stalk which helps the ribosome interact with GTP-bound translation factors. Is thus essential for accurate translation.</text>
</comment>
<comment type="subunit">
    <text evidence="1">Homodimer. Part of the ribosomal stalk of the 50S ribosomal subunit. Forms a multimeric L10(L12)X complex, where L10 forms an elongated spine to which 2 to 4 L12 dimers bind in a sequential fashion. Binds GTP-bound translation factors.</text>
</comment>
<comment type="similarity">
    <text evidence="1">Belongs to the bacterial ribosomal protein bL12 family.</text>
</comment>
<evidence type="ECO:0000255" key="1">
    <source>
        <dbReference type="HAMAP-Rule" id="MF_00368"/>
    </source>
</evidence>
<evidence type="ECO:0000305" key="2"/>